<protein>
    <recommendedName>
        <fullName>Glutathione S-transferase P 2</fullName>
        <ecNumber>2.5.1.18</ecNumber>
    </recommendedName>
    <alternativeName>
        <fullName>BBGSTP2-2</fullName>
    </alternativeName>
    <alternativeName>
        <fullName>GST class-pi</fullName>
    </alternativeName>
</protein>
<feature type="chain" id="PRO_0000185909" description="Glutathione S-transferase P 2">
    <location>
        <begin position="1"/>
        <end position="210"/>
    </location>
</feature>
<feature type="domain" description="GST N-terminal">
    <location>
        <begin position="1"/>
        <end position="82"/>
    </location>
</feature>
<feature type="domain" description="GST C-terminal">
    <location>
        <begin position="83"/>
        <end position="204"/>
    </location>
</feature>
<feature type="binding site" evidence="1">
    <location>
        <position position="7"/>
    </location>
    <ligand>
        <name>glutathione</name>
        <dbReference type="ChEBI" id="CHEBI:57925"/>
    </ligand>
</feature>
<feature type="binding site" evidence="1">
    <location>
        <position position="13"/>
    </location>
    <ligand>
        <name>glutathione</name>
        <dbReference type="ChEBI" id="CHEBI:57925"/>
    </ligand>
</feature>
<feature type="binding site" evidence="1">
    <location>
        <position position="38"/>
    </location>
    <ligand>
        <name>glutathione</name>
        <dbReference type="ChEBI" id="CHEBI:57925"/>
    </ligand>
</feature>
<feature type="binding site" evidence="1">
    <location>
        <position position="46"/>
    </location>
    <ligand>
        <name>glutathione</name>
        <dbReference type="ChEBI" id="CHEBI:57925"/>
    </ligand>
</feature>
<feature type="binding site" evidence="1">
    <location>
        <begin position="53"/>
        <end position="54"/>
    </location>
    <ligand>
        <name>glutathione</name>
        <dbReference type="ChEBI" id="CHEBI:57925"/>
    </ligand>
</feature>
<feature type="binding site" evidence="1">
    <location>
        <begin position="66"/>
        <end position="67"/>
    </location>
    <ligand>
        <name>glutathione</name>
        <dbReference type="ChEBI" id="CHEBI:57925"/>
    </ligand>
</feature>
<evidence type="ECO:0000250" key="1">
    <source>
        <dbReference type="UniProtKB" id="P09211"/>
    </source>
</evidence>
<evidence type="ECO:0000269" key="2">
    <source>
    </source>
</evidence>
<evidence type="ECO:0000305" key="3"/>
<proteinExistence type="evidence at protein level"/>
<sequence length="210" mass="24179">SGYTLTYFPLRGRAEAMRLLLGDQGVSWTDDEVQMQDWAAGIRDLKKNAVFGQIPRFQEGDFVLYQSQTILRLLARYGLSGSNEREIAINEMMNDGVEDLRLKYYKFIFWDNEANKEKFLEELATQLGYFERILTNNAGKTFVLVGDKISYADYNLLDTLFCVLDLSPTCLSGFPLLSDYVERLGKRPKLQQYLKSEGRKRRPINGNGKQ</sequence>
<comment type="function">
    <text evidence="2">Conjugation of reduced glutathione to a wide number of exogenous and endogenous hydrophobic electrophiles.</text>
</comment>
<comment type="catalytic activity">
    <reaction evidence="2">
        <text>RX + glutathione = an S-substituted glutathione + a halide anion + H(+)</text>
        <dbReference type="Rhea" id="RHEA:16437"/>
        <dbReference type="ChEBI" id="CHEBI:15378"/>
        <dbReference type="ChEBI" id="CHEBI:16042"/>
        <dbReference type="ChEBI" id="CHEBI:17792"/>
        <dbReference type="ChEBI" id="CHEBI:57925"/>
        <dbReference type="ChEBI" id="CHEBI:90779"/>
        <dbReference type="EC" id="2.5.1.18"/>
    </reaction>
</comment>
<comment type="subunit">
    <text evidence="2">Homodimer.</text>
</comment>
<comment type="tissue specificity">
    <text evidence="2">Liver, kidney, muscle, skin, lung and ovary.</text>
</comment>
<comment type="similarity">
    <text evidence="3">Belongs to the GST superfamily. Pi family.</text>
</comment>
<name>GSTP2_BUFBU</name>
<accession>P83325</accession>
<organism>
    <name type="scientific">Bufo bufo</name>
    <name type="common">European toad</name>
    <name type="synonym">Rana bufo</name>
    <dbReference type="NCBI Taxonomy" id="8384"/>
    <lineage>
        <taxon>Eukaryota</taxon>
        <taxon>Metazoa</taxon>
        <taxon>Chordata</taxon>
        <taxon>Craniata</taxon>
        <taxon>Vertebrata</taxon>
        <taxon>Euteleostomi</taxon>
        <taxon>Amphibia</taxon>
        <taxon>Batrachia</taxon>
        <taxon>Anura</taxon>
        <taxon>Neobatrachia</taxon>
        <taxon>Hyloidea</taxon>
        <taxon>Bufonidae</taxon>
        <taxon>Bufo</taxon>
    </lineage>
</organism>
<dbReference type="EC" id="2.5.1.18"/>
<dbReference type="SMR" id="P83325"/>
<dbReference type="GO" id="GO:0005829">
    <property type="term" value="C:cytosol"/>
    <property type="evidence" value="ECO:0007669"/>
    <property type="project" value="TreeGrafter"/>
</dbReference>
<dbReference type="GO" id="GO:0004364">
    <property type="term" value="F:glutathione transferase activity"/>
    <property type="evidence" value="ECO:0007669"/>
    <property type="project" value="UniProtKB-EC"/>
</dbReference>
<dbReference type="GO" id="GO:0006749">
    <property type="term" value="P:glutathione metabolic process"/>
    <property type="evidence" value="ECO:0007669"/>
    <property type="project" value="TreeGrafter"/>
</dbReference>
<dbReference type="CDD" id="cd03210">
    <property type="entry name" value="GST_C_Pi"/>
    <property type="match status" value="1"/>
</dbReference>
<dbReference type="FunFam" id="1.20.1050.10:FF:000020">
    <property type="entry name" value="Glutathione S-transferase P 1"/>
    <property type="match status" value="1"/>
</dbReference>
<dbReference type="Gene3D" id="1.20.1050.10">
    <property type="match status" value="1"/>
</dbReference>
<dbReference type="Gene3D" id="3.40.30.10">
    <property type="entry name" value="Glutaredoxin"/>
    <property type="match status" value="1"/>
</dbReference>
<dbReference type="InterPro" id="IPR010987">
    <property type="entry name" value="Glutathione-S-Trfase_C-like"/>
</dbReference>
<dbReference type="InterPro" id="IPR036282">
    <property type="entry name" value="Glutathione-S-Trfase_C_sf"/>
</dbReference>
<dbReference type="InterPro" id="IPR004045">
    <property type="entry name" value="Glutathione_S-Trfase_N"/>
</dbReference>
<dbReference type="InterPro" id="IPR004046">
    <property type="entry name" value="GST_C"/>
</dbReference>
<dbReference type="InterPro" id="IPR003082">
    <property type="entry name" value="GST_pi"/>
</dbReference>
<dbReference type="InterPro" id="IPR050213">
    <property type="entry name" value="GST_superfamily"/>
</dbReference>
<dbReference type="InterPro" id="IPR036249">
    <property type="entry name" value="Thioredoxin-like_sf"/>
</dbReference>
<dbReference type="PANTHER" id="PTHR11571">
    <property type="entry name" value="GLUTATHIONE S-TRANSFERASE"/>
    <property type="match status" value="1"/>
</dbReference>
<dbReference type="PANTHER" id="PTHR11571:SF141">
    <property type="entry name" value="GLUTATHIONE S-TRANSFERASE"/>
    <property type="match status" value="1"/>
</dbReference>
<dbReference type="Pfam" id="PF14497">
    <property type="entry name" value="GST_C_3"/>
    <property type="match status" value="1"/>
</dbReference>
<dbReference type="Pfam" id="PF02798">
    <property type="entry name" value="GST_N"/>
    <property type="match status" value="1"/>
</dbReference>
<dbReference type="PRINTS" id="PR01268">
    <property type="entry name" value="GSTRNSFRASEP"/>
</dbReference>
<dbReference type="SFLD" id="SFLDG01205">
    <property type="entry name" value="AMPS.1"/>
    <property type="match status" value="1"/>
</dbReference>
<dbReference type="SFLD" id="SFLDG00363">
    <property type="entry name" value="AMPS_(cytGST):_Alpha-__Mu-__Pi"/>
    <property type="match status" value="1"/>
</dbReference>
<dbReference type="SUPFAM" id="SSF47616">
    <property type="entry name" value="GST C-terminal domain-like"/>
    <property type="match status" value="1"/>
</dbReference>
<dbReference type="SUPFAM" id="SSF52833">
    <property type="entry name" value="Thioredoxin-like"/>
    <property type="match status" value="1"/>
</dbReference>
<dbReference type="PROSITE" id="PS50405">
    <property type="entry name" value="GST_CTER"/>
    <property type="match status" value="1"/>
</dbReference>
<dbReference type="PROSITE" id="PS50404">
    <property type="entry name" value="GST_NTER"/>
    <property type="match status" value="1"/>
</dbReference>
<reference key="1">
    <citation type="journal article" date="2002" name="Int. J. Biochem. Cell Biol.">
        <title>Amino acid sequence of the major form of toad liver glutathione transferase.</title>
        <authorList>
            <person name="Bucciarelli T."/>
            <person name="Sacchetta P."/>
            <person name="Amicarelli F."/>
            <person name="Petruzzelli R."/>
            <person name="Melino S."/>
            <person name="Rotilio D."/>
            <person name="Celli N."/>
            <person name="Di Ilio C."/>
        </authorList>
    </citation>
    <scope>PROTEIN SEQUENCE</scope>
    <scope>FUNCTION</scope>
    <scope>CATALYTIC ACTIVITY</scope>
    <scope>SUBUNIT</scope>
    <scope>TISSUE SPECIFICITY</scope>
    <source>
        <tissue>Liver</tissue>
    </source>
</reference>
<keyword id="KW-0903">Direct protein sequencing</keyword>
<keyword id="KW-0808">Transferase</keyword>